<reference key="1">
    <citation type="journal article" date="2004" name="Cell">
        <title>Accelerated evolution of nervous system genes in the origin of Homo sapiens.</title>
        <authorList>
            <person name="Dorus S."/>
            <person name="Vallender E.J."/>
            <person name="Evans P.D."/>
            <person name="Anderson J.R."/>
            <person name="Gilbert S.L."/>
            <person name="Mahowald M."/>
            <person name="Wyckoff G.J."/>
            <person name="Malcom C.M."/>
            <person name="Lahn B.T."/>
        </authorList>
    </citation>
    <scope>NUCLEOTIDE SEQUENCE [MRNA]</scope>
</reference>
<comment type="function">
    <text evidence="2 3 4">Involved in the activation cascade of caspases responsible for apoptosis execution. At the onset of apoptosis, it proteolytically cleaves poly(ADP-ribose) polymerase PARP1 at a '216-Asp-|-Gly-217' bond. Cleaves and activates sterol regulatory element binding proteins (SREBPs) between the basic helix-loop-helix leucine zipper domain and the membrane attachment domain. Cleaves and activates caspase-6, -7 and -9 (CASP6, CASP7 and CASP9, respectively). Cleaves and inactivates interleukin-18 (IL18) (By similarity). Triggers cell adhesion in sympathetic neurons through RET cleavage (By similarity). Cleaves IL-1 beta between an Asp and an Ala, releasing the mature cytokine which is involved in a variety of inflammatory processes (By similarity). Cleaves and inhibits serine/threonine-protein kinase AKT1 in response to oxidative stress. Acts as an inhibitor of type I interferon production during virus-induced apoptosis by mediating cleavage of antiviral proteins CGAS, IRF3 and MAVS, thereby preventing cytokine overproduction. Also involved in pyroptosis by mediating cleavage and activation of gasdermin-E (GSDME) (By similarity). Cleaves XRCC4 and phospholipid scramblase proteins XKR4, XKR8 and XKR9, leading to promote phosphatidylserine exposure on apoptotic cell surface (By similarity). Cleaves BIRC6 following inhibition of BIRC6-caspase binding by DIABLO/SMAC (By similarity).</text>
</comment>
<comment type="catalytic activity">
    <reaction evidence="2">
        <text>Strict requirement for an Asp residue at positions P1 and P4. It has a preferred cleavage sequence of Asp-Xaa-Xaa-Asp-|- with a hydrophobic amino-acid residue at P2 and a hydrophilic amino-acid residue at P3, although Val or Ala are also accepted at this position.</text>
        <dbReference type="EC" id="3.4.22.56"/>
    </reaction>
</comment>
<comment type="activity regulation">
    <text evidence="2">Inhibited by BIRC6; following inhibition of BIRC6-caspase binding by DIABLO/SMAC, BIRC6 is subjected to caspase cleavage, leading to an increase in active caspases.</text>
</comment>
<comment type="subunit">
    <text evidence="2">Heterotetramer that consists of two anti-parallel arranged heterodimers, each one formed by a 17 kDa (p17) and a 12 kDa (p12) subunit. Interacts with BIRC6/bruce.</text>
</comment>
<comment type="subcellular location">
    <subcellularLocation>
        <location evidence="2">Cytoplasm</location>
    </subcellularLocation>
</comment>
<comment type="PTM">
    <text evidence="2">Cleavage by granzyme B, caspase-6, caspase-8 and caspase-10 generates the two active subunits. Additional processing of the propeptides is likely due to the autocatalytic activity of the activated protease. Active heterodimers between the small subunit of caspase-7 protease and the large subunit of caspase-3 also occur and vice versa.</text>
</comment>
<comment type="PTM">
    <text evidence="2">S-nitrosylated on its catalytic site cysteine in unstimulated cell lines and denitrosylated upon activation of the Fas apoptotic pathway, associated with an increase in intracellular caspase activity. Fas therefore activates caspase-3 not only by inducing the cleavage of the caspase zymogen to its active subunits, but also by stimulating the denitrosylation of its active site thiol.</text>
</comment>
<comment type="PTM">
    <text evidence="2">Ubiquitinated by BIRC6; this activity is inhibited by DIABLO/SMAC.</text>
</comment>
<comment type="similarity">
    <text evidence="6">Belongs to the peptidase C14A family.</text>
</comment>
<sequence>MENTENSVDSKSIKNLEPKIIHGSQSMDSGISLDNSYKMDYPEMGLCIIINNKNFHKSTGMTSRSGTDVDAANLRETFRNLKYEVRNKNDLTREEIVELMRDVSKEDHSKRSSFVCVLLSHGEEGIIFGTNGPVDLKKITNFFRGDRCRSLTGKPKLFIIQACRGTELDCGIETDSGVDDDMACHKIPVEADFLYAYSTAPGYYSWRNSKDGSWFIQSLCAMLKQYADKLEFMHILTRVNRKVATEFESFSFDATFHAKKQIPCIVSMLTKELYFYH</sequence>
<protein>
    <recommendedName>
        <fullName>Caspase-3</fullName>
        <shortName>CASP-3</shortName>
        <ecNumber>3.4.22.56</ecNumber>
    </recommendedName>
    <component>
        <recommendedName>
            <fullName>Caspase-3 subunit p17</fullName>
        </recommendedName>
    </component>
    <component>
        <recommendedName>
            <fullName>Caspase-3 subunit p12</fullName>
        </recommendedName>
    </component>
</protein>
<keyword id="KW-0007">Acetylation</keyword>
<keyword id="KW-0053">Apoptosis</keyword>
<keyword id="KW-0963">Cytoplasm</keyword>
<keyword id="KW-0378">Hydrolase</keyword>
<keyword id="KW-0597">Phosphoprotein</keyword>
<keyword id="KW-0645">Protease</keyword>
<keyword id="KW-1185">Reference proteome</keyword>
<keyword id="KW-0702">S-nitrosylation</keyword>
<keyword id="KW-0788">Thiol protease</keyword>
<keyword id="KW-0832">Ubl conjugation</keyword>
<keyword id="KW-0865">Zymogen</keyword>
<feature type="propeptide" id="PRO_0000004577" evidence="2">
    <location>
        <begin position="1"/>
        <end position="9"/>
    </location>
</feature>
<feature type="propeptide" id="PRO_0000004578" evidence="2">
    <location>
        <begin position="10"/>
        <end position="28"/>
    </location>
</feature>
<feature type="chain" id="PRO_0000004579" description="Caspase-3 subunit p17" evidence="2">
    <location>
        <begin position="29"/>
        <end position="175"/>
    </location>
</feature>
<feature type="chain" id="PRO_0000004580" description="Caspase-3 subunit p12" evidence="2">
    <location>
        <begin position="176"/>
        <end position="277"/>
    </location>
</feature>
<feature type="region of interest" description="Disordered" evidence="5">
    <location>
        <begin position="1"/>
        <end position="20"/>
    </location>
</feature>
<feature type="compositionally biased region" description="Polar residues" evidence="5">
    <location>
        <begin position="1"/>
        <end position="10"/>
    </location>
</feature>
<feature type="compositionally biased region" description="Basic and acidic residues" evidence="5">
    <location>
        <begin position="11"/>
        <end position="20"/>
    </location>
</feature>
<feature type="active site" evidence="1">
    <location>
        <position position="121"/>
    </location>
</feature>
<feature type="active site" evidence="1">
    <location>
        <position position="163"/>
    </location>
</feature>
<feature type="modified residue" description="N-acetylmethionine" evidence="2">
    <location>
        <position position="1"/>
    </location>
</feature>
<feature type="modified residue" description="N6-acetyllysine" evidence="3">
    <location>
        <position position="11"/>
    </location>
</feature>
<feature type="modified residue" description="Phosphoserine" evidence="2">
    <location>
        <position position="26"/>
    </location>
</feature>
<feature type="modified residue" description="S-nitrosocysteine; in inhibited form" evidence="2">
    <location>
        <position position="163"/>
    </location>
</feature>
<organism>
    <name type="scientific">Pan troglodytes</name>
    <name type="common">Chimpanzee</name>
    <dbReference type="NCBI Taxonomy" id="9598"/>
    <lineage>
        <taxon>Eukaryota</taxon>
        <taxon>Metazoa</taxon>
        <taxon>Chordata</taxon>
        <taxon>Craniata</taxon>
        <taxon>Vertebrata</taxon>
        <taxon>Euteleostomi</taxon>
        <taxon>Mammalia</taxon>
        <taxon>Eutheria</taxon>
        <taxon>Euarchontoglires</taxon>
        <taxon>Primates</taxon>
        <taxon>Haplorrhini</taxon>
        <taxon>Catarrhini</taxon>
        <taxon>Hominidae</taxon>
        <taxon>Pan</taxon>
    </lineage>
</organism>
<accession>Q5IS54</accession>
<dbReference type="EC" id="3.4.22.56"/>
<dbReference type="EMBL" id="AY665274">
    <property type="protein sequence ID" value="AAV74312.1"/>
    <property type="molecule type" value="mRNA"/>
</dbReference>
<dbReference type="RefSeq" id="NP_001012435.1">
    <property type="nucleotide sequence ID" value="NM_001012433.1"/>
</dbReference>
<dbReference type="RefSeq" id="XP_009446812.1">
    <property type="nucleotide sequence ID" value="XM_009448537.5"/>
</dbReference>
<dbReference type="RefSeq" id="XP_009446814.1">
    <property type="nucleotide sequence ID" value="XM_009448539.5"/>
</dbReference>
<dbReference type="RefSeq" id="XP_016806491.1">
    <property type="nucleotide sequence ID" value="XM_016951002.1"/>
</dbReference>
<dbReference type="RefSeq" id="XP_016806492.1">
    <property type="nucleotide sequence ID" value="XM_016951003.4"/>
</dbReference>
<dbReference type="RefSeq" id="XP_016806493.1">
    <property type="nucleotide sequence ID" value="XM_016951004.4"/>
</dbReference>
<dbReference type="RefSeq" id="XP_063664519.1">
    <property type="nucleotide sequence ID" value="XM_063808449.1"/>
</dbReference>
<dbReference type="SMR" id="Q5IS54"/>
<dbReference type="FunCoup" id="Q5IS54">
    <property type="interactions" value="4080"/>
</dbReference>
<dbReference type="STRING" id="9598.ENSPTRP00000054330"/>
<dbReference type="MEROPS" id="C14.003"/>
<dbReference type="PaxDb" id="9598-ENSPTRP00000054330"/>
<dbReference type="Ensembl" id="ENSPTRT00000061788.3">
    <property type="protein sequence ID" value="ENSPTRP00000054330.2"/>
    <property type="gene ID" value="ENSPTRG00000016640.6"/>
</dbReference>
<dbReference type="GeneID" id="461669"/>
<dbReference type="KEGG" id="ptr:461669"/>
<dbReference type="CTD" id="836"/>
<dbReference type="VGNC" id="VGNC:2081">
    <property type="gene designation" value="CASP3"/>
</dbReference>
<dbReference type="eggNOG" id="KOG3573">
    <property type="taxonomic scope" value="Eukaryota"/>
</dbReference>
<dbReference type="GeneTree" id="ENSGT00940000153232"/>
<dbReference type="HOGENOM" id="CLU_036904_2_0_1"/>
<dbReference type="InParanoid" id="Q5IS54"/>
<dbReference type="OMA" id="WHYFTAT"/>
<dbReference type="TreeFam" id="TF102023"/>
<dbReference type="Proteomes" id="UP000002277">
    <property type="component" value="Chromosome 4"/>
</dbReference>
<dbReference type="Bgee" id="ENSPTRG00000016640">
    <property type="expression patterns" value="Expressed in thymus and 21 other cell types or tissues"/>
</dbReference>
<dbReference type="GO" id="GO:0005737">
    <property type="term" value="C:cytoplasm"/>
    <property type="evidence" value="ECO:0000318"/>
    <property type="project" value="GO_Central"/>
</dbReference>
<dbReference type="GO" id="GO:0005829">
    <property type="term" value="C:cytosol"/>
    <property type="evidence" value="ECO:0007669"/>
    <property type="project" value="Ensembl"/>
</dbReference>
<dbReference type="GO" id="GO:0031264">
    <property type="term" value="C:death-inducing signaling complex"/>
    <property type="evidence" value="ECO:0000318"/>
    <property type="project" value="GO_Central"/>
</dbReference>
<dbReference type="GO" id="GO:0098978">
    <property type="term" value="C:glutamatergic synapse"/>
    <property type="evidence" value="ECO:0007669"/>
    <property type="project" value="Ensembl"/>
</dbReference>
<dbReference type="GO" id="GO:0005634">
    <property type="term" value="C:nucleus"/>
    <property type="evidence" value="ECO:0007669"/>
    <property type="project" value="Ensembl"/>
</dbReference>
<dbReference type="GO" id="GO:0014069">
    <property type="term" value="C:postsynaptic density"/>
    <property type="evidence" value="ECO:0007669"/>
    <property type="project" value="Ensembl"/>
</dbReference>
<dbReference type="GO" id="GO:0004190">
    <property type="term" value="F:aspartic-type endopeptidase activity"/>
    <property type="evidence" value="ECO:0007669"/>
    <property type="project" value="Ensembl"/>
</dbReference>
<dbReference type="GO" id="GO:0004861">
    <property type="term" value="F:cyclin-dependent protein serine/threonine kinase inhibitor activity"/>
    <property type="evidence" value="ECO:0007669"/>
    <property type="project" value="Ensembl"/>
</dbReference>
<dbReference type="GO" id="GO:0004197">
    <property type="term" value="F:cysteine-type endopeptidase activity"/>
    <property type="evidence" value="ECO:0000250"/>
    <property type="project" value="UniProtKB"/>
</dbReference>
<dbReference type="GO" id="GO:0004175">
    <property type="term" value="F:endopeptidase activity"/>
    <property type="evidence" value="ECO:0000250"/>
    <property type="project" value="UniProtKB"/>
</dbReference>
<dbReference type="GO" id="GO:0008047">
    <property type="term" value="F:enzyme activator activity"/>
    <property type="evidence" value="ECO:0000318"/>
    <property type="project" value="GO_Central"/>
</dbReference>
<dbReference type="GO" id="GO:0061713">
    <property type="term" value="P:anterior neural tube closure"/>
    <property type="evidence" value="ECO:0007669"/>
    <property type="project" value="Ensembl"/>
</dbReference>
<dbReference type="GO" id="GO:0006915">
    <property type="term" value="P:apoptotic process"/>
    <property type="evidence" value="ECO:0000318"/>
    <property type="project" value="GO_Central"/>
</dbReference>
<dbReference type="GO" id="GO:0001782">
    <property type="term" value="P:B cell homeostasis"/>
    <property type="evidence" value="ECO:0007669"/>
    <property type="project" value="Ensembl"/>
</dbReference>
<dbReference type="GO" id="GO:0045165">
    <property type="term" value="P:cell fate commitment"/>
    <property type="evidence" value="ECO:0007669"/>
    <property type="project" value="Ensembl"/>
</dbReference>
<dbReference type="GO" id="GO:0072734">
    <property type="term" value="P:cellular response to staurosporine"/>
    <property type="evidence" value="ECO:0007669"/>
    <property type="project" value="Ensembl"/>
</dbReference>
<dbReference type="GO" id="GO:0006974">
    <property type="term" value="P:DNA damage response"/>
    <property type="evidence" value="ECO:0007669"/>
    <property type="project" value="Ensembl"/>
</dbReference>
<dbReference type="GO" id="GO:1904019">
    <property type="term" value="P:epithelial cell apoptotic process"/>
    <property type="evidence" value="ECO:0007669"/>
    <property type="project" value="Ensembl"/>
</dbReference>
<dbReference type="GO" id="GO:0030218">
    <property type="term" value="P:erythrocyte differentiation"/>
    <property type="evidence" value="ECO:0000318"/>
    <property type="project" value="GO_Central"/>
</dbReference>
<dbReference type="GO" id="GO:0097194">
    <property type="term" value="P:execution phase of apoptosis"/>
    <property type="evidence" value="ECO:0000318"/>
    <property type="project" value="GO_Central"/>
</dbReference>
<dbReference type="GO" id="GO:0044346">
    <property type="term" value="P:fibroblast apoptotic process"/>
    <property type="evidence" value="ECO:0007669"/>
    <property type="project" value="Ensembl"/>
</dbReference>
<dbReference type="GO" id="GO:0034349">
    <property type="term" value="P:glial cell apoptotic process"/>
    <property type="evidence" value="ECO:0007669"/>
    <property type="project" value="Ensembl"/>
</dbReference>
<dbReference type="GO" id="GO:0007507">
    <property type="term" value="P:heart development"/>
    <property type="evidence" value="ECO:0007669"/>
    <property type="project" value="Ensembl"/>
</dbReference>
<dbReference type="GO" id="GO:0008627">
    <property type="term" value="P:intrinsic apoptotic signaling pathway in response to osmotic stress"/>
    <property type="evidence" value="ECO:0007669"/>
    <property type="project" value="Ensembl"/>
</dbReference>
<dbReference type="GO" id="GO:0030216">
    <property type="term" value="P:keratinocyte differentiation"/>
    <property type="evidence" value="ECO:0000318"/>
    <property type="project" value="GO_Central"/>
</dbReference>
<dbReference type="GO" id="GO:0046007">
    <property type="term" value="P:negative regulation of activated T cell proliferation"/>
    <property type="evidence" value="ECO:0007669"/>
    <property type="project" value="Ensembl"/>
</dbReference>
<dbReference type="GO" id="GO:0030889">
    <property type="term" value="P:negative regulation of B cell proliferation"/>
    <property type="evidence" value="ECO:0007669"/>
    <property type="project" value="Ensembl"/>
</dbReference>
<dbReference type="GO" id="GO:0045786">
    <property type="term" value="P:negative regulation of cell cycle"/>
    <property type="evidence" value="ECO:0007669"/>
    <property type="project" value="Ensembl"/>
</dbReference>
<dbReference type="GO" id="GO:0001818">
    <property type="term" value="P:negative regulation of cytokine production"/>
    <property type="evidence" value="ECO:0007669"/>
    <property type="project" value="Ensembl"/>
</dbReference>
<dbReference type="GO" id="GO:0051402">
    <property type="term" value="P:neuron apoptotic process"/>
    <property type="evidence" value="ECO:0007669"/>
    <property type="project" value="Ensembl"/>
</dbReference>
<dbReference type="GO" id="GO:0030182">
    <property type="term" value="P:neuron differentiation"/>
    <property type="evidence" value="ECO:0000318"/>
    <property type="project" value="GO_Central"/>
</dbReference>
<dbReference type="GO" id="GO:0048011">
    <property type="term" value="P:neurotrophin TRK receptor signaling pathway"/>
    <property type="evidence" value="ECO:0007669"/>
    <property type="project" value="Ensembl"/>
</dbReference>
<dbReference type="GO" id="GO:1902004">
    <property type="term" value="P:positive regulation of amyloid-beta formation"/>
    <property type="evidence" value="ECO:0000250"/>
    <property type="project" value="UniProtKB"/>
</dbReference>
<dbReference type="GO" id="GO:0043525">
    <property type="term" value="P:positive regulation of neuron apoptotic process"/>
    <property type="evidence" value="ECO:0000318"/>
    <property type="project" value="GO_Central"/>
</dbReference>
<dbReference type="GO" id="GO:0140639">
    <property type="term" value="P:positive regulation of pyroptotic inflammatory response"/>
    <property type="evidence" value="ECO:0007669"/>
    <property type="project" value="Ensembl"/>
</dbReference>
<dbReference type="GO" id="GO:0030163">
    <property type="term" value="P:protein catabolic process"/>
    <property type="evidence" value="ECO:0007669"/>
    <property type="project" value="Ensembl"/>
</dbReference>
<dbReference type="GO" id="GO:0016485">
    <property type="term" value="P:protein processing"/>
    <property type="evidence" value="ECO:0007669"/>
    <property type="project" value="Ensembl"/>
</dbReference>
<dbReference type="GO" id="GO:0006508">
    <property type="term" value="P:proteolysis"/>
    <property type="evidence" value="ECO:0000250"/>
    <property type="project" value="UniProtKB"/>
</dbReference>
<dbReference type="GO" id="GO:0070269">
    <property type="term" value="P:pyroptotic inflammatory response"/>
    <property type="evidence" value="ECO:0007669"/>
    <property type="project" value="Ensembl"/>
</dbReference>
<dbReference type="GO" id="GO:0031647">
    <property type="term" value="P:regulation of protein stability"/>
    <property type="evidence" value="ECO:0000250"/>
    <property type="project" value="UniProtKB"/>
</dbReference>
<dbReference type="GO" id="GO:0098693">
    <property type="term" value="P:regulation of synaptic vesicle cycle"/>
    <property type="evidence" value="ECO:0007669"/>
    <property type="project" value="Ensembl"/>
</dbReference>
<dbReference type="GO" id="GO:0009411">
    <property type="term" value="P:response to UV"/>
    <property type="evidence" value="ECO:0007669"/>
    <property type="project" value="Ensembl"/>
</dbReference>
<dbReference type="GO" id="GO:0009611">
    <property type="term" value="P:response to wounding"/>
    <property type="evidence" value="ECO:0007669"/>
    <property type="project" value="Ensembl"/>
</dbReference>
<dbReference type="GO" id="GO:0007605">
    <property type="term" value="P:sensory perception of sound"/>
    <property type="evidence" value="ECO:0007669"/>
    <property type="project" value="Ensembl"/>
</dbReference>
<dbReference type="GO" id="GO:0043029">
    <property type="term" value="P:T cell homeostasis"/>
    <property type="evidence" value="ECO:0007669"/>
    <property type="project" value="Ensembl"/>
</dbReference>
<dbReference type="CDD" id="cd00032">
    <property type="entry name" value="CASc"/>
    <property type="match status" value="1"/>
</dbReference>
<dbReference type="FunFam" id="3.30.70.1470:FF:000002">
    <property type="entry name" value="Caspase-3"/>
    <property type="match status" value="1"/>
</dbReference>
<dbReference type="FunFam" id="3.40.50.1460:FF:000001">
    <property type="entry name" value="Caspase-3 preproprotein"/>
    <property type="match status" value="1"/>
</dbReference>
<dbReference type="Gene3D" id="3.40.50.1460">
    <property type="match status" value="1"/>
</dbReference>
<dbReference type="InterPro" id="IPR029030">
    <property type="entry name" value="Caspase-like_dom_sf"/>
</dbReference>
<dbReference type="InterPro" id="IPR033139">
    <property type="entry name" value="Caspase_cys_AS"/>
</dbReference>
<dbReference type="InterPro" id="IPR016129">
    <property type="entry name" value="Caspase_his_AS"/>
</dbReference>
<dbReference type="InterPro" id="IPR002398">
    <property type="entry name" value="Pept_C14"/>
</dbReference>
<dbReference type="InterPro" id="IPR011600">
    <property type="entry name" value="Pept_C14_caspase"/>
</dbReference>
<dbReference type="InterPro" id="IPR002138">
    <property type="entry name" value="Pept_C14_p10"/>
</dbReference>
<dbReference type="InterPro" id="IPR001309">
    <property type="entry name" value="Pept_C14_p20"/>
</dbReference>
<dbReference type="InterPro" id="IPR015917">
    <property type="entry name" value="Pept_C14A"/>
</dbReference>
<dbReference type="PANTHER" id="PTHR10454">
    <property type="entry name" value="CASPASE"/>
    <property type="match status" value="1"/>
</dbReference>
<dbReference type="PANTHER" id="PTHR10454:SF198">
    <property type="entry name" value="CASPASE-3"/>
    <property type="match status" value="1"/>
</dbReference>
<dbReference type="Pfam" id="PF00656">
    <property type="entry name" value="Peptidase_C14"/>
    <property type="match status" value="1"/>
</dbReference>
<dbReference type="PRINTS" id="PR00376">
    <property type="entry name" value="IL1BCENZYME"/>
</dbReference>
<dbReference type="SMART" id="SM00115">
    <property type="entry name" value="CASc"/>
    <property type="match status" value="1"/>
</dbReference>
<dbReference type="SUPFAM" id="SSF52129">
    <property type="entry name" value="Caspase-like"/>
    <property type="match status" value="1"/>
</dbReference>
<dbReference type="PROSITE" id="PS01122">
    <property type="entry name" value="CASPASE_CYS"/>
    <property type="match status" value="1"/>
</dbReference>
<dbReference type="PROSITE" id="PS01121">
    <property type="entry name" value="CASPASE_HIS"/>
    <property type="match status" value="1"/>
</dbReference>
<dbReference type="PROSITE" id="PS50207">
    <property type="entry name" value="CASPASE_P10"/>
    <property type="match status" value="1"/>
</dbReference>
<dbReference type="PROSITE" id="PS50208">
    <property type="entry name" value="CASPASE_P20"/>
    <property type="match status" value="1"/>
</dbReference>
<proteinExistence type="evidence at transcript level"/>
<evidence type="ECO:0000250" key="1">
    <source>
        <dbReference type="UniProtKB" id="P29466"/>
    </source>
</evidence>
<evidence type="ECO:0000250" key="2">
    <source>
        <dbReference type="UniProtKB" id="P42574"/>
    </source>
</evidence>
<evidence type="ECO:0000250" key="3">
    <source>
        <dbReference type="UniProtKB" id="P70677"/>
    </source>
</evidence>
<evidence type="ECO:0000250" key="4">
    <source>
        <dbReference type="UniProtKB" id="Q60431"/>
    </source>
</evidence>
<evidence type="ECO:0000256" key="5">
    <source>
        <dbReference type="SAM" id="MobiDB-lite"/>
    </source>
</evidence>
<evidence type="ECO:0000305" key="6"/>
<name>CASP3_PANTR</name>
<gene>
    <name type="primary">CASP3</name>
</gene>